<gene>
    <name evidence="16" type="primary">Rab7a</name>
    <name type="synonym">Rab7</name>
</gene>
<reference key="1">
    <citation type="journal article" date="1995" name="Biochim. Biophys. Acta">
        <title>Cloning and expression analysis of the murine Rab7 cDNA.</title>
        <authorList>
            <person name="Vitelli R."/>
            <person name="Chiariello M."/>
            <person name="Bruni C.B."/>
            <person name="Bucci C."/>
        </authorList>
    </citation>
    <scope>NUCLEOTIDE SEQUENCE [MRNA]</scope>
</reference>
<reference key="2">
    <citation type="journal article" date="2005" name="Science">
        <title>The transcriptional landscape of the mammalian genome.</title>
        <authorList>
            <person name="Carninci P."/>
            <person name="Kasukawa T."/>
            <person name="Katayama S."/>
            <person name="Gough J."/>
            <person name="Frith M.C."/>
            <person name="Maeda N."/>
            <person name="Oyama R."/>
            <person name="Ravasi T."/>
            <person name="Lenhard B."/>
            <person name="Wells C."/>
            <person name="Kodzius R."/>
            <person name="Shimokawa K."/>
            <person name="Bajic V.B."/>
            <person name="Brenner S.E."/>
            <person name="Batalov S."/>
            <person name="Forrest A.R."/>
            <person name="Zavolan M."/>
            <person name="Davis M.J."/>
            <person name="Wilming L.G."/>
            <person name="Aidinis V."/>
            <person name="Allen J.E."/>
            <person name="Ambesi-Impiombato A."/>
            <person name="Apweiler R."/>
            <person name="Aturaliya R.N."/>
            <person name="Bailey T.L."/>
            <person name="Bansal M."/>
            <person name="Baxter L."/>
            <person name="Beisel K.W."/>
            <person name="Bersano T."/>
            <person name="Bono H."/>
            <person name="Chalk A.M."/>
            <person name="Chiu K.P."/>
            <person name="Choudhary V."/>
            <person name="Christoffels A."/>
            <person name="Clutterbuck D.R."/>
            <person name="Crowe M.L."/>
            <person name="Dalla E."/>
            <person name="Dalrymple B.P."/>
            <person name="de Bono B."/>
            <person name="Della Gatta G."/>
            <person name="di Bernardo D."/>
            <person name="Down T."/>
            <person name="Engstrom P."/>
            <person name="Fagiolini M."/>
            <person name="Faulkner G."/>
            <person name="Fletcher C.F."/>
            <person name="Fukushima T."/>
            <person name="Furuno M."/>
            <person name="Futaki S."/>
            <person name="Gariboldi M."/>
            <person name="Georgii-Hemming P."/>
            <person name="Gingeras T.R."/>
            <person name="Gojobori T."/>
            <person name="Green R.E."/>
            <person name="Gustincich S."/>
            <person name="Harbers M."/>
            <person name="Hayashi Y."/>
            <person name="Hensch T.K."/>
            <person name="Hirokawa N."/>
            <person name="Hill D."/>
            <person name="Huminiecki L."/>
            <person name="Iacono M."/>
            <person name="Ikeo K."/>
            <person name="Iwama A."/>
            <person name="Ishikawa T."/>
            <person name="Jakt M."/>
            <person name="Kanapin A."/>
            <person name="Katoh M."/>
            <person name="Kawasawa Y."/>
            <person name="Kelso J."/>
            <person name="Kitamura H."/>
            <person name="Kitano H."/>
            <person name="Kollias G."/>
            <person name="Krishnan S.P."/>
            <person name="Kruger A."/>
            <person name="Kummerfeld S.K."/>
            <person name="Kurochkin I.V."/>
            <person name="Lareau L.F."/>
            <person name="Lazarevic D."/>
            <person name="Lipovich L."/>
            <person name="Liu J."/>
            <person name="Liuni S."/>
            <person name="McWilliam S."/>
            <person name="Madan Babu M."/>
            <person name="Madera M."/>
            <person name="Marchionni L."/>
            <person name="Matsuda H."/>
            <person name="Matsuzawa S."/>
            <person name="Miki H."/>
            <person name="Mignone F."/>
            <person name="Miyake S."/>
            <person name="Morris K."/>
            <person name="Mottagui-Tabar S."/>
            <person name="Mulder N."/>
            <person name="Nakano N."/>
            <person name="Nakauchi H."/>
            <person name="Ng P."/>
            <person name="Nilsson R."/>
            <person name="Nishiguchi S."/>
            <person name="Nishikawa S."/>
            <person name="Nori F."/>
            <person name="Ohara O."/>
            <person name="Okazaki Y."/>
            <person name="Orlando V."/>
            <person name="Pang K.C."/>
            <person name="Pavan W.J."/>
            <person name="Pavesi G."/>
            <person name="Pesole G."/>
            <person name="Petrovsky N."/>
            <person name="Piazza S."/>
            <person name="Reed J."/>
            <person name="Reid J.F."/>
            <person name="Ring B.Z."/>
            <person name="Ringwald M."/>
            <person name="Rost B."/>
            <person name="Ruan Y."/>
            <person name="Salzberg S.L."/>
            <person name="Sandelin A."/>
            <person name="Schneider C."/>
            <person name="Schoenbach C."/>
            <person name="Sekiguchi K."/>
            <person name="Semple C.A."/>
            <person name="Seno S."/>
            <person name="Sessa L."/>
            <person name="Sheng Y."/>
            <person name="Shibata Y."/>
            <person name="Shimada H."/>
            <person name="Shimada K."/>
            <person name="Silva D."/>
            <person name="Sinclair B."/>
            <person name="Sperling S."/>
            <person name="Stupka E."/>
            <person name="Sugiura K."/>
            <person name="Sultana R."/>
            <person name="Takenaka Y."/>
            <person name="Taki K."/>
            <person name="Tammoja K."/>
            <person name="Tan S.L."/>
            <person name="Tang S."/>
            <person name="Taylor M.S."/>
            <person name="Tegner J."/>
            <person name="Teichmann S.A."/>
            <person name="Ueda H.R."/>
            <person name="van Nimwegen E."/>
            <person name="Verardo R."/>
            <person name="Wei C.L."/>
            <person name="Yagi K."/>
            <person name="Yamanishi H."/>
            <person name="Zabarovsky E."/>
            <person name="Zhu S."/>
            <person name="Zimmer A."/>
            <person name="Hide W."/>
            <person name="Bult C."/>
            <person name="Grimmond S.M."/>
            <person name="Teasdale R.D."/>
            <person name="Liu E.T."/>
            <person name="Brusic V."/>
            <person name="Quackenbush J."/>
            <person name="Wahlestedt C."/>
            <person name="Mattick J.S."/>
            <person name="Hume D.A."/>
            <person name="Kai C."/>
            <person name="Sasaki D."/>
            <person name="Tomaru Y."/>
            <person name="Fukuda S."/>
            <person name="Kanamori-Katayama M."/>
            <person name="Suzuki M."/>
            <person name="Aoki J."/>
            <person name="Arakawa T."/>
            <person name="Iida J."/>
            <person name="Imamura K."/>
            <person name="Itoh M."/>
            <person name="Kato T."/>
            <person name="Kawaji H."/>
            <person name="Kawagashira N."/>
            <person name="Kawashima T."/>
            <person name="Kojima M."/>
            <person name="Kondo S."/>
            <person name="Konno H."/>
            <person name="Nakano K."/>
            <person name="Ninomiya N."/>
            <person name="Nishio T."/>
            <person name="Okada M."/>
            <person name="Plessy C."/>
            <person name="Shibata K."/>
            <person name="Shiraki T."/>
            <person name="Suzuki S."/>
            <person name="Tagami M."/>
            <person name="Waki K."/>
            <person name="Watahiki A."/>
            <person name="Okamura-Oho Y."/>
            <person name="Suzuki H."/>
            <person name="Kawai J."/>
            <person name="Hayashizaki Y."/>
        </authorList>
    </citation>
    <scope>NUCLEOTIDE SEQUENCE [LARGE SCALE MRNA]</scope>
    <source>
        <strain>C57BL/6J</strain>
        <tissue>Liver</tissue>
    </source>
</reference>
<reference key="3">
    <citation type="journal article" date="2004" name="Genome Res.">
        <title>The status, quality, and expansion of the NIH full-length cDNA project: the Mammalian Gene Collection (MGC).</title>
        <authorList>
            <consortium name="The MGC Project Team"/>
        </authorList>
    </citation>
    <scope>NUCLEOTIDE SEQUENCE [LARGE SCALE MRNA]</scope>
    <source>
        <strain>C57BL/6J</strain>
        <strain>FVB/N</strain>
        <tissue>Brain</tissue>
        <tissue>Mammary tumor</tissue>
    </source>
</reference>
<reference key="4">
    <citation type="submission" date="2007-04" db="UniProtKB">
        <authorList>
            <person name="Lubec G."/>
            <person name="Kang S.U."/>
        </authorList>
    </citation>
    <scope>PROTEIN SEQUENCE OF 11-31; 70-79; 114-126 AND 147-157</scope>
    <scope>IDENTIFICATION BY MASS SPECTROMETRY</scope>
    <source>
        <strain>C57BL/6J</strain>
        <tissue>Brain</tissue>
    </source>
</reference>
<reference key="5">
    <citation type="journal article" date="2003" name="Am. J. Hum. Genet.">
        <title>Mutations in the small GTP-ase late endosomal protein RAB7 cause Charcot-Marie-Tooth type 2B neuropathy.</title>
        <authorList>
            <person name="Verhoeven K."/>
            <person name="De Jonghe P."/>
            <person name="Coen K."/>
            <person name="Verpoorten N."/>
            <person name="Auer-Grumbach M."/>
            <person name="Kwon J.M."/>
            <person name="FitzPatrick D."/>
            <person name="Schmedding E."/>
            <person name="De Vriendt E."/>
            <person name="Jacobs A."/>
            <person name="Van Gerwen V."/>
            <person name="Wagner K."/>
            <person name="Hartung H.-P."/>
            <person name="Timmerman V."/>
        </authorList>
    </citation>
    <scope>TISSUE SPECIFICITY</scope>
</reference>
<reference key="6">
    <citation type="journal article" date="2003" name="Mol. Biol. Cell">
        <title>Rabring7, a novel Rab7 target protein with a RING finger motif.</title>
        <authorList>
            <person name="Mizuno K."/>
            <person name="Kitamura A."/>
            <person name="Sasaki T."/>
        </authorList>
    </citation>
    <scope>INTERACTION WITH RNF115</scope>
</reference>
<reference key="7">
    <citation type="journal article" date="2006" name="Nature">
        <title>TBC-domain GAPs for Rab GTPases accelerate GTP hydrolysis by a dual-finger mechanism.</title>
        <authorList>
            <person name="Pan X."/>
            <person name="Eathiraj S."/>
            <person name="Munson M."/>
            <person name="Lambright D.G."/>
        </authorList>
    </citation>
    <scope>CATALYTIC ACTIVITY</scope>
</reference>
<reference key="8">
    <citation type="journal article" date="2009" name="Immunity">
        <title>The phagosomal proteome in interferon-gamma-activated macrophages.</title>
        <authorList>
            <person name="Trost M."/>
            <person name="English L."/>
            <person name="Lemieux S."/>
            <person name="Courcelles M."/>
            <person name="Desjardins M."/>
            <person name="Thibault P."/>
        </authorList>
    </citation>
    <scope>PHOSPHORYLATION [LARGE SCALE ANALYSIS] AT SER-72</scope>
    <scope>IDENTIFICATION BY MASS SPECTROMETRY [LARGE SCALE ANALYSIS]</scope>
</reference>
<reference key="9">
    <citation type="journal article" date="2010" name="Cell">
        <title>A tissue-specific atlas of mouse protein phosphorylation and expression.</title>
        <authorList>
            <person name="Huttlin E.L."/>
            <person name="Jedrychowski M.P."/>
            <person name="Elias J.E."/>
            <person name="Goswami T."/>
            <person name="Rad R."/>
            <person name="Beausoleil S.A."/>
            <person name="Villen J."/>
            <person name="Haas W."/>
            <person name="Sowa M.E."/>
            <person name="Gygi S.P."/>
        </authorList>
    </citation>
    <scope>PHOSPHORYLATION [LARGE SCALE ANALYSIS] AT SER-72</scope>
    <scope>IDENTIFICATION BY MASS SPECTROMETRY [LARGE SCALE ANALYSIS]</scope>
    <source>
        <tissue>Brain</tissue>
        <tissue>Brown adipose tissue</tissue>
        <tissue>Heart</tissue>
        <tissue>Kidney</tissue>
        <tissue>Liver</tissue>
        <tissue>Lung</tissue>
        <tissue>Pancreas</tissue>
        <tissue>Spleen</tissue>
        <tissue>Testis</tissue>
    </source>
</reference>
<reference key="10">
    <citation type="journal article" date="2010" name="J. Biol. Chem.">
        <title>Assembly of the biogenesis of lysosome-related organelles complex-3 (BLOC-3) and its interaction with Rab9.</title>
        <authorList>
            <person name="Kloer D.P."/>
            <person name="Rojas R."/>
            <person name="Ivan V."/>
            <person name="Moriyama K."/>
            <person name="van Vlijmen T."/>
            <person name="Murthy N."/>
            <person name="Ghirlando R."/>
            <person name="van der Sluijs P."/>
            <person name="Hurley J.H."/>
            <person name="Bonifacino J.S."/>
        </authorList>
    </citation>
    <scope>LACK OF INTERACTION WITH HPS4 AND THE BLOC-3 COMPLEX</scope>
</reference>
<reference key="11">
    <citation type="journal article" date="2013" name="Acta Neuropathol.">
        <title>Charcot-Marie-Tooth type 2B disease-causing RAB7A mutant proteins show altered interaction with the neuronal intermediate filament peripherin.</title>
        <authorList>
            <person name="Cogli L."/>
            <person name="Progida C."/>
            <person name="Thomas C.L."/>
            <person name="Spencer-Dene B."/>
            <person name="Donno C."/>
            <person name="Schiavo G."/>
            <person name="Bucci C."/>
        </authorList>
    </citation>
    <scope>FUNCTION</scope>
    <scope>INTERACTION WITH PRPH</scope>
    <scope>SUBCELLULAR LOCATION</scope>
    <scope>DEVELOPMENTAL STAGE</scope>
</reference>
<reference key="12">
    <citation type="journal article" date="2014" name="Hum. Mol. Genet.">
        <title>C9ORF72, implicated in amytrophic lateral sclerosis and frontotemporal dementia, regulates endosomal trafficking.</title>
        <authorList>
            <person name="Farg M.A."/>
            <person name="Sundaramoorthy V."/>
            <person name="Sultana J.M."/>
            <person name="Yang S."/>
            <person name="Atkinson R.A."/>
            <person name="Levina V."/>
            <person name="Halloran M.A."/>
            <person name="Gleeson P.A."/>
            <person name="Blair I.P."/>
            <person name="Soo K.Y."/>
            <person name="King A.E."/>
            <person name="Atkin J.D."/>
        </authorList>
    </citation>
    <scope>INTERACTION WITH C9ORF72</scope>
</reference>
<reference key="13">
    <citation type="journal article" date="2013" name="Autophagy">
        <title>beta-adrenergic receptor-stimulated lipolysis requires the RAB7-mediated autolysosomal lipid degradation.</title>
        <authorList>
            <person name="Lizaso A."/>
            <person name="Tan K.T."/>
            <person name="Lee Y.H."/>
        </authorList>
    </citation>
    <scope>DISRUPTION PHENOTYPE</scope>
    <scope>SUBCELLULAR LOCATION</scope>
    <scope>FUNCTION</scope>
</reference>
<reference key="14">
    <citation type="journal article" date="2016" name="JCI Insight">
        <title>PLEKHM1/DEF8/RAB7 complex regulates lysosome positioning and bone homeostasis.</title>
        <authorList>
            <person name="Fujiwara T."/>
            <person name="Ye S."/>
            <person name="Castro-Gomes T."/>
            <person name="Winchell C.G."/>
            <person name="Andrews N.W."/>
            <person name="Voth D.E."/>
            <person name="Varughese K.I."/>
            <person name="Mackintosh S.G."/>
            <person name="Feng Y."/>
            <person name="Pavlos N."/>
            <person name="Nakamura T."/>
            <person name="Manolagas S.C."/>
            <person name="Zhao H."/>
        </authorList>
    </citation>
    <scope>INTERACTION WITH PLEKHM1</scope>
</reference>
<reference key="15">
    <citation type="journal article" date="2017" name="Elife">
        <title>Genetic screen in Drosophila muscle identifies autophagy-mediated T-tubule remodeling and a Rab2 role in autophagy.</title>
        <authorList>
            <person name="Fujita N."/>
            <person name="Huang W."/>
            <person name="Lin T.H."/>
            <person name="Groulx J.F."/>
            <person name="Jean S."/>
            <person name="Nguyen J."/>
            <person name="Kuchitsu Y."/>
            <person name="Koyama-Honda I."/>
            <person name="Mizushima N."/>
            <person name="Fukuda M."/>
            <person name="Kiger A.A."/>
        </authorList>
    </citation>
    <scope>INTERACTION WITH VPS39 AND VPS41</scope>
    <scope>SUBCELLULAR LOCATION</scope>
</reference>
<reference key="16">
    <citation type="journal article" date="2024" name="Bone Res.">
        <title>RUFY4 deletion prevents pathological bone loss by blocking endo-lysosomal trafficking of osteoclasts.</title>
        <authorList>
            <person name="Kim M."/>
            <person name="Park J.H."/>
            <person name="Go M."/>
            <person name="Lee N."/>
            <person name="Seo J."/>
            <person name="Lee H."/>
            <person name="Kim D."/>
            <person name="Ha H."/>
            <person name="Kim T."/>
            <person name="Jeong M.S."/>
            <person name="Kim S."/>
            <person name="Kim T."/>
            <person name="Kim H.S."/>
            <person name="Kang D."/>
            <person name="Shim H."/>
            <person name="Lee S.Y."/>
        </authorList>
    </citation>
    <scope>INTERACTION WITH RUFY4</scope>
</reference>
<evidence type="ECO:0000250" key="1"/>
<evidence type="ECO:0000250" key="2">
    <source>
        <dbReference type="UniProtKB" id="P09527"/>
    </source>
</evidence>
<evidence type="ECO:0000250" key="3">
    <source>
        <dbReference type="UniProtKB" id="P51149"/>
    </source>
</evidence>
<evidence type="ECO:0000269" key="4">
    <source>
    </source>
</evidence>
<evidence type="ECO:0000269" key="5">
    <source>
    </source>
</evidence>
<evidence type="ECO:0000269" key="6">
    <source>
    </source>
</evidence>
<evidence type="ECO:0000269" key="7">
    <source>
    </source>
</evidence>
<evidence type="ECO:0000269" key="8">
    <source>
    </source>
</evidence>
<evidence type="ECO:0000269" key="9">
    <source>
    </source>
</evidence>
<evidence type="ECO:0000269" key="10">
    <source>
    </source>
</evidence>
<evidence type="ECO:0000269" key="11">
    <source>
    </source>
</evidence>
<evidence type="ECO:0000269" key="12">
    <source>
    </source>
</evidence>
<evidence type="ECO:0000269" key="13">
    <source>
    </source>
</evidence>
<evidence type="ECO:0000305" key="14"/>
<evidence type="ECO:0000305" key="15">
    <source>
    </source>
</evidence>
<evidence type="ECO:0000312" key="16">
    <source>
        <dbReference type="MGI" id="MGI:105068"/>
    </source>
</evidence>
<evidence type="ECO:0007744" key="17">
    <source>
    </source>
</evidence>
<evidence type="ECO:0007744" key="18">
    <source>
    </source>
</evidence>
<evidence type="ECO:0007829" key="19">
    <source>
        <dbReference type="PDB" id="5Z2M"/>
    </source>
</evidence>
<name>RAB7A_MOUSE</name>
<sequence>MTSRKKVLLKVIILGDSGVGKTSLMNQYVNKKFSNQYKATIGADFLTKEVMVDDRLVTMQIWDTAGQERFQSLGVAFYRGADCCVLVFDVTAPNTFKTLDSWRDEFLIQASPRDPENFPFVVLGNKIDLENRQVATKRAQAWCYSKNNIPYFETSAKEAINVEQAFQTIARNALKQETEVELYNEFPEPIKLDKNDRAKASAESCSC</sequence>
<dbReference type="EC" id="3.6.5.2" evidence="6"/>
<dbReference type="EMBL" id="X89650">
    <property type="protein sequence ID" value="CAA61797.1"/>
    <property type="molecule type" value="mRNA"/>
</dbReference>
<dbReference type="EMBL" id="AK005004">
    <property type="protein sequence ID" value="BAB23738.1"/>
    <property type="molecule type" value="mRNA"/>
</dbReference>
<dbReference type="EMBL" id="BC004597">
    <property type="protein sequence ID" value="AAH04597.1"/>
    <property type="molecule type" value="mRNA"/>
</dbReference>
<dbReference type="EMBL" id="BC086793">
    <property type="protein sequence ID" value="AAH86793.1"/>
    <property type="molecule type" value="mRNA"/>
</dbReference>
<dbReference type="CCDS" id="CCDS39552.1"/>
<dbReference type="PIR" id="S62733">
    <property type="entry name" value="S62733"/>
</dbReference>
<dbReference type="RefSeq" id="NP_001280581.1">
    <property type="nucleotide sequence ID" value="NM_001293652.1"/>
</dbReference>
<dbReference type="RefSeq" id="NP_001280582.1">
    <property type="nucleotide sequence ID" value="NM_001293653.1"/>
</dbReference>
<dbReference type="RefSeq" id="NP_001280583.1">
    <property type="nucleotide sequence ID" value="NM_001293654.1"/>
</dbReference>
<dbReference type="RefSeq" id="NP_001280584.1">
    <property type="nucleotide sequence ID" value="NM_001293655.1"/>
</dbReference>
<dbReference type="RefSeq" id="NP_033031.2">
    <property type="nucleotide sequence ID" value="NM_009005.3"/>
</dbReference>
<dbReference type="PDB" id="5Z2M">
    <property type="method" value="X-ray"/>
    <property type="resolution" value="2.14 A"/>
    <property type="chains" value="A/C=1-176"/>
</dbReference>
<dbReference type="PDBsum" id="5Z2M"/>
<dbReference type="SMR" id="P51150"/>
<dbReference type="BioGRID" id="202553">
    <property type="interactions" value="54"/>
</dbReference>
<dbReference type="DIP" id="DIP-60513N"/>
<dbReference type="FunCoup" id="P51150">
    <property type="interactions" value="3794"/>
</dbReference>
<dbReference type="IntAct" id="P51150">
    <property type="interactions" value="15"/>
</dbReference>
<dbReference type="MINT" id="P51150"/>
<dbReference type="STRING" id="10090.ENSMUSP00000109230"/>
<dbReference type="GlyGen" id="P51150">
    <property type="glycosylation" value="1 site, 1 O-linked glycan (1 site)"/>
</dbReference>
<dbReference type="iPTMnet" id="P51150"/>
<dbReference type="MetOSite" id="P51150"/>
<dbReference type="PhosphoSitePlus" id="P51150"/>
<dbReference type="SwissPalm" id="P51150"/>
<dbReference type="jPOST" id="P51150"/>
<dbReference type="PaxDb" id="10090-ENSMUSP00000109230"/>
<dbReference type="PeptideAtlas" id="P51150"/>
<dbReference type="ProteomicsDB" id="255068"/>
<dbReference type="Pumba" id="P51150"/>
<dbReference type="ABCD" id="P51150">
    <property type="antibodies" value="21 sequenced antibodies"/>
</dbReference>
<dbReference type="Antibodypedia" id="1885">
    <property type="antibodies" value="368 antibodies from 40 providers"/>
</dbReference>
<dbReference type="DNASU" id="19349"/>
<dbReference type="Ensembl" id="ENSMUST00000095048.6">
    <property type="protein sequence ID" value="ENSMUSP00000092658.4"/>
    <property type="gene ID" value="ENSMUSG00000079477.10"/>
</dbReference>
<dbReference type="Ensembl" id="ENSMUST00000113596.8">
    <property type="protein sequence ID" value="ENSMUSP00000109226.2"/>
    <property type="gene ID" value="ENSMUSG00000079477.10"/>
</dbReference>
<dbReference type="Ensembl" id="ENSMUST00000113597.8">
    <property type="protein sequence ID" value="ENSMUSP00000109227.2"/>
    <property type="gene ID" value="ENSMUSG00000079477.10"/>
</dbReference>
<dbReference type="Ensembl" id="ENSMUST00000113598.8">
    <property type="protein sequence ID" value="ENSMUSP00000109228.2"/>
    <property type="gene ID" value="ENSMUSG00000079477.10"/>
</dbReference>
<dbReference type="Ensembl" id="ENSMUST00000113600.10">
    <property type="protein sequence ID" value="ENSMUSP00000109230.4"/>
    <property type="gene ID" value="ENSMUSG00000079477.10"/>
</dbReference>
<dbReference type="GeneID" id="19349"/>
<dbReference type="KEGG" id="mmu:19349"/>
<dbReference type="UCSC" id="uc009cuv.2">
    <property type="organism name" value="mouse"/>
</dbReference>
<dbReference type="AGR" id="MGI:105068"/>
<dbReference type="CTD" id="19349"/>
<dbReference type="MGI" id="MGI:105068">
    <property type="gene designation" value="Rab7"/>
</dbReference>
<dbReference type="VEuPathDB" id="HostDB:ENSMUSG00000079477"/>
<dbReference type="eggNOG" id="KOG0394">
    <property type="taxonomic scope" value="Eukaryota"/>
</dbReference>
<dbReference type="GeneTree" id="ENSGT00940000155864"/>
<dbReference type="HOGENOM" id="CLU_041217_10_6_1"/>
<dbReference type="InParanoid" id="P51150"/>
<dbReference type="OMA" id="TSWKDEF"/>
<dbReference type="OrthoDB" id="1436450at2759"/>
<dbReference type="PhylomeDB" id="P51150"/>
<dbReference type="TreeFam" id="TF105605"/>
<dbReference type="Reactome" id="R-MMU-2132295">
    <property type="pathway name" value="MHC class II antigen presentation"/>
</dbReference>
<dbReference type="Reactome" id="R-MMU-6798695">
    <property type="pathway name" value="Neutrophil degranulation"/>
</dbReference>
<dbReference type="Reactome" id="R-MMU-8854214">
    <property type="pathway name" value="TBC/RABGAPs"/>
</dbReference>
<dbReference type="Reactome" id="R-MMU-8873719">
    <property type="pathway name" value="RAB geranylgeranylation"/>
</dbReference>
<dbReference type="Reactome" id="R-MMU-8876198">
    <property type="pathway name" value="RAB GEFs exchange GTP for GDP on RABs"/>
</dbReference>
<dbReference type="Reactome" id="R-MMU-9013149">
    <property type="pathway name" value="RAC1 GTPase cycle"/>
</dbReference>
<dbReference type="Reactome" id="R-MMU-9013404">
    <property type="pathway name" value="RAC2 GTPase cycle"/>
</dbReference>
<dbReference type="Reactome" id="R-MMU-9013405">
    <property type="pathway name" value="RHOD GTPase cycle"/>
</dbReference>
<dbReference type="Reactome" id="R-MMU-9013406">
    <property type="pathway name" value="RHOQ GTPase cycle"/>
</dbReference>
<dbReference type="Reactome" id="R-MMU-9013407">
    <property type="pathway name" value="RHOH GTPase cycle"/>
</dbReference>
<dbReference type="Reactome" id="R-MMU-9013408">
    <property type="pathway name" value="RHOG GTPase cycle"/>
</dbReference>
<dbReference type="Reactome" id="R-MMU-9013423">
    <property type="pathway name" value="RAC3 GTPase cycle"/>
</dbReference>
<dbReference type="Reactome" id="R-MMU-9035034">
    <property type="pathway name" value="RHOF GTPase cycle"/>
</dbReference>
<dbReference type="BioGRID-ORCS" id="19349">
    <property type="hits" value="34 hits in 79 CRISPR screens"/>
</dbReference>
<dbReference type="CD-CODE" id="8F289D40">
    <property type="entry name" value="ELVA"/>
</dbReference>
<dbReference type="CD-CODE" id="CE726F99">
    <property type="entry name" value="Postsynaptic density"/>
</dbReference>
<dbReference type="ChiTaRS" id="Rab7">
    <property type="organism name" value="mouse"/>
</dbReference>
<dbReference type="PRO" id="PR:P51150"/>
<dbReference type="Proteomes" id="UP000000589">
    <property type="component" value="Chromosome 6"/>
</dbReference>
<dbReference type="RNAct" id="P51150">
    <property type="molecule type" value="protein"/>
</dbReference>
<dbReference type="Bgee" id="ENSMUSG00000079477">
    <property type="expression patterns" value="Expressed in secondary oocyte and 65 other cell types or tissues"/>
</dbReference>
<dbReference type="ExpressionAtlas" id="P51150">
    <property type="expression patterns" value="baseline and differential"/>
</dbReference>
<dbReference type="GO" id="GO:0097208">
    <property type="term" value="C:alveolar lamellar body"/>
    <property type="evidence" value="ECO:0007669"/>
    <property type="project" value="Ensembl"/>
</dbReference>
<dbReference type="GO" id="GO:0000421">
    <property type="term" value="C:autophagosome membrane"/>
    <property type="evidence" value="ECO:0007669"/>
    <property type="project" value="UniProtKB-SubCell"/>
</dbReference>
<dbReference type="GO" id="GO:0005737">
    <property type="term" value="C:cytoplasm"/>
    <property type="evidence" value="ECO:0000314"/>
    <property type="project" value="MGI"/>
</dbReference>
<dbReference type="GO" id="GO:0005829">
    <property type="term" value="C:cytosol"/>
    <property type="evidence" value="ECO:0000314"/>
    <property type="project" value="GO_Central"/>
</dbReference>
<dbReference type="GO" id="GO:0005768">
    <property type="term" value="C:endosome"/>
    <property type="evidence" value="ECO:0000314"/>
    <property type="project" value="MGI"/>
</dbReference>
<dbReference type="GO" id="GO:0098978">
    <property type="term" value="C:glutamatergic synapse"/>
    <property type="evidence" value="ECO:0000314"/>
    <property type="project" value="SynGO"/>
</dbReference>
<dbReference type="GO" id="GO:0005794">
    <property type="term" value="C:Golgi apparatus"/>
    <property type="evidence" value="ECO:0000314"/>
    <property type="project" value="MGI"/>
</dbReference>
<dbReference type="GO" id="GO:0005770">
    <property type="term" value="C:late endosome"/>
    <property type="evidence" value="ECO:0000314"/>
    <property type="project" value="MGI"/>
</dbReference>
<dbReference type="GO" id="GO:0031902">
    <property type="term" value="C:late endosome membrane"/>
    <property type="evidence" value="ECO:0000314"/>
    <property type="project" value="GO_Central"/>
</dbReference>
<dbReference type="GO" id="GO:0005811">
    <property type="term" value="C:lipid droplet"/>
    <property type="evidence" value="ECO:0000314"/>
    <property type="project" value="GO_Central"/>
</dbReference>
<dbReference type="GO" id="GO:0005765">
    <property type="term" value="C:lysosomal membrane"/>
    <property type="evidence" value="ECO:0007669"/>
    <property type="project" value="UniProtKB-SubCell"/>
</dbReference>
<dbReference type="GO" id="GO:0005764">
    <property type="term" value="C:lysosome"/>
    <property type="evidence" value="ECO:0000314"/>
    <property type="project" value="MGI"/>
</dbReference>
<dbReference type="GO" id="GO:0033162">
    <property type="term" value="C:melanosome membrane"/>
    <property type="evidence" value="ECO:0007669"/>
    <property type="project" value="UniProtKB-SubCell"/>
</dbReference>
<dbReference type="GO" id="GO:0031966">
    <property type="term" value="C:mitochondrial membrane"/>
    <property type="evidence" value="ECO:0007669"/>
    <property type="project" value="UniProtKB-SubCell"/>
</dbReference>
<dbReference type="GO" id="GO:0005739">
    <property type="term" value="C:mitochondrion"/>
    <property type="evidence" value="ECO:0000250"/>
    <property type="project" value="UniProtKB"/>
</dbReference>
<dbReference type="GO" id="GO:0045335">
    <property type="term" value="C:phagocytic vesicle"/>
    <property type="evidence" value="ECO:0000250"/>
    <property type="project" value="UniProtKB"/>
</dbReference>
<dbReference type="GO" id="GO:0030670">
    <property type="term" value="C:phagocytic vesicle membrane"/>
    <property type="evidence" value="ECO:0007669"/>
    <property type="project" value="UniProtKB-SubCell"/>
</dbReference>
<dbReference type="GO" id="GO:0034045">
    <property type="term" value="C:phagophore assembly site membrane"/>
    <property type="evidence" value="ECO:0000314"/>
    <property type="project" value="UniProtKB"/>
</dbReference>
<dbReference type="GO" id="GO:0098830">
    <property type="term" value="C:presynaptic endosome"/>
    <property type="evidence" value="ECO:0007669"/>
    <property type="project" value="Ensembl"/>
</dbReference>
<dbReference type="GO" id="GO:0030904">
    <property type="term" value="C:retromer complex"/>
    <property type="evidence" value="ECO:0007669"/>
    <property type="project" value="Ensembl"/>
</dbReference>
<dbReference type="GO" id="GO:0030672">
    <property type="term" value="C:synaptic vesicle membrane"/>
    <property type="evidence" value="ECO:0007669"/>
    <property type="project" value="Ensembl"/>
</dbReference>
<dbReference type="GO" id="GO:0003925">
    <property type="term" value="F:G protein activity"/>
    <property type="evidence" value="ECO:0000314"/>
    <property type="project" value="UniProtKB"/>
</dbReference>
<dbReference type="GO" id="GO:0019003">
    <property type="term" value="F:GDP binding"/>
    <property type="evidence" value="ECO:0007669"/>
    <property type="project" value="Ensembl"/>
</dbReference>
<dbReference type="GO" id="GO:0005525">
    <property type="term" value="F:GTP binding"/>
    <property type="evidence" value="ECO:0007669"/>
    <property type="project" value="UniProtKB-KW"/>
</dbReference>
<dbReference type="GO" id="GO:1905394">
    <property type="term" value="F:retromer complex binding"/>
    <property type="evidence" value="ECO:0007669"/>
    <property type="project" value="Ensembl"/>
</dbReference>
<dbReference type="GO" id="GO:0031267">
    <property type="term" value="F:small GTPase binding"/>
    <property type="evidence" value="ECO:0007669"/>
    <property type="project" value="Ensembl"/>
</dbReference>
<dbReference type="GO" id="GO:0000045">
    <property type="term" value="P:autophagosome assembly"/>
    <property type="evidence" value="ECO:0007669"/>
    <property type="project" value="Ensembl"/>
</dbReference>
<dbReference type="GO" id="GO:0045453">
    <property type="term" value="P:bone resorption"/>
    <property type="evidence" value="ECO:0007669"/>
    <property type="project" value="Ensembl"/>
</dbReference>
<dbReference type="GO" id="GO:0045022">
    <property type="term" value="P:early endosome to late endosome transport"/>
    <property type="evidence" value="ECO:0000250"/>
    <property type="project" value="UniProtKB"/>
</dbReference>
<dbReference type="GO" id="GO:0099638">
    <property type="term" value="P:endosome to plasma membrane protein transport"/>
    <property type="evidence" value="ECO:0000250"/>
    <property type="project" value="UniProtKB"/>
</dbReference>
<dbReference type="GO" id="GO:0007174">
    <property type="term" value="P:epidermal growth factor catabolic process"/>
    <property type="evidence" value="ECO:0007669"/>
    <property type="project" value="Ensembl"/>
</dbReference>
<dbReference type="GO" id="GO:0051650">
    <property type="term" value="P:establishment of vesicle localization"/>
    <property type="evidence" value="ECO:0000315"/>
    <property type="project" value="MGI"/>
</dbReference>
<dbReference type="GO" id="GO:0006886">
    <property type="term" value="P:intracellular protein transport"/>
    <property type="evidence" value="ECO:0000304"/>
    <property type="project" value="MGI"/>
</dbReference>
<dbReference type="GO" id="GO:0016042">
    <property type="term" value="P:lipid catabolic process"/>
    <property type="evidence" value="ECO:0007669"/>
    <property type="project" value="UniProtKB-KW"/>
</dbReference>
<dbReference type="GO" id="GO:0061724">
    <property type="term" value="P:lipophagy"/>
    <property type="evidence" value="ECO:0000315"/>
    <property type="project" value="GO_Central"/>
</dbReference>
<dbReference type="GO" id="GO:1903542">
    <property type="term" value="P:negative regulation of exosomal secretion"/>
    <property type="evidence" value="ECO:0007669"/>
    <property type="project" value="Ensembl"/>
</dbReference>
<dbReference type="GO" id="GO:0098943">
    <property type="term" value="P:neurotransmitter receptor transport, postsynaptic endosome to lysosome"/>
    <property type="evidence" value="ECO:0000314"/>
    <property type="project" value="SynGO"/>
</dbReference>
<dbReference type="GO" id="GO:0090383">
    <property type="term" value="P:phagosome acidification"/>
    <property type="evidence" value="ECO:0000250"/>
    <property type="project" value="UniProtKB"/>
</dbReference>
<dbReference type="GO" id="GO:0090385">
    <property type="term" value="P:phagosome-lysosome fusion"/>
    <property type="evidence" value="ECO:0000250"/>
    <property type="project" value="UniProtKB"/>
</dbReference>
<dbReference type="GO" id="GO:1903543">
    <property type="term" value="P:positive regulation of exosomal secretion"/>
    <property type="evidence" value="ECO:0007669"/>
    <property type="project" value="Ensembl"/>
</dbReference>
<dbReference type="GO" id="GO:0045732">
    <property type="term" value="P:positive regulation of protein catabolic process"/>
    <property type="evidence" value="ECO:0007669"/>
    <property type="project" value="Ensembl"/>
</dbReference>
<dbReference type="GO" id="GO:0048524">
    <property type="term" value="P:positive regulation of viral process"/>
    <property type="evidence" value="ECO:0007669"/>
    <property type="project" value="Ensembl"/>
</dbReference>
<dbReference type="GO" id="GO:0006622">
    <property type="term" value="P:protein targeting to lysosome"/>
    <property type="evidence" value="ECO:0007669"/>
    <property type="project" value="Ensembl"/>
</dbReference>
<dbReference type="GO" id="GO:0022615">
    <property type="term" value="P:protein to membrane docking"/>
    <property type="evidence" value="ECO:0007669"/>
    <property type="project" value="Ensembl"/>
</dbReference>
<dbReference type="GO" id="GO:0009617">
    <property type="term" value="P:response to bacterium"/>
    <property type="evidence" value="ECO:0007669"/>
    <property type="project" value="Ensembl"/>
</dbReference>
<dbReference type="GO" id="GO:0042147">
    <property type="term" value="P:retrograde transport, endosome to Golgi"/>
    <property type="evidence" value="ECO:0007669"/>
    <property type="project" value="Ensembl"/>
</dbReference>
<dbReference type="GO" id="GO:0036466">
    <property type="term" value="P:synaptic vesicle recycling via endosome"/>
    <property type="evidence" value="ECO:0007669"/>
    <property type="project" value="Ensembl"/>
</dbReference>
<dbReference type="GO" id="GO:0099003">
    <property type="term" value="P:vesicle-mediated transport in synapse"/>
    <property type="evidence" value="ECO:0000314"/>
    <property type="project" value="SynGO"/>
</dbReference>
<dbReference type="GO" id="GO:0019076">
    <property type="term" value="P:viral release from host cell"/>
    <property type="evidence" value="ECO:0007669"/>
    <property type="project" value="Ensembl"/>
</dbReference>
<dbReference type="CDD" id="cd01862">
    <property type="entry name" value="Rab7"/>
    <property type="match status" value="1"/>
</dbReference>
<dbReference type="FunFam" id="3.40.50.300:FF:000086">
    <property type="entry name" value="Ras-related small GTPase"/>
    <property type="match status" value="1"/>
</dbReference>
<dbReference type="Gene3D" id="3.40.50.300">
    <property type="entry name" value="P-loop containing nucleotide triphosphate hydrolases"/>
    <property type="match status" value="1"/>
</dbReference>
<dbReference type="InterPro" id="IPR027417">
    <property type="entry name" value="P-loop_NTPase"/>
</dbReference>
<dbReference type="InterPro" id="IPR005225">
    <property type="entry name" value="Small_GTP-bd"/>
</dbReference>
<dbReference type="InterPro" id="IPR001806">
    <property type="entry name" value="Small_GTPase"/>
</dbReference>
<dbReference type="NCBIfam" id="TIGR00231">
    <property type="entry name" value="small_GTP"/>
    <property type="match status" value="1"/>
</dbReference>
<dbReference type="PANTHER" id="PTHR47981">
    <property type="entry name" value="RAB FAMILY"/>
    <property type="match status" value="1"/>
</dbReference>
<dbReference type="PANTHER" id="PTHR47981:SF13">
    <property type="entry name" value="RAS-RELATED PROTEIN RAB-7A"/>
    <property type="match status" value="1"/>
</dbReference>
<dbReference type="Pfam" id="PF00071">
    <property type="entry name" value="Ras"/>
    <property type="match status" value="1"/>
</dbReference>
<dbReference type="PRINTS" id="PR00449">
    <property type="entry name" value="RASTRNSFRMNG"/>
</dbReference>
<dbReference type="SMART" id="SM00175">
    <property type="entry name" value="RAB"/>
    <property type="match status" value="1"/>
</dbReference>
<dbReference type="SMART" id="SM00176">
    <property type="entry name" value="RAN"/>
    <property type="match status" value="1"/>
</dbReference>
<dbReference type="SMART" id="SM00173">
    <property type="entry name" value="RAS"/>
    <property type="match status" value="1"/>
</dbReference>
<dbReference type="SMART" id="SM00174">
    <property type="entry name" value="RHO"/>
    <property type="match status" value="1"/>
</dbReference>
<dbReference type="SUPFAM" id="SSF52540">
    <property type="entry name" value="P-loop containing nucleoside triphosphate hydrolases"/>
    <property type="match status" value="1"/>
</dbReference>
<dbReference type="PROSITE" id="PS51419">
    <property type="entry name" value="RAB"/>
    <property type="match status" value="1"/>
</dbReference>
<feature type="initiator methionine" description="Removed" evidence="3">
    <location>
        <position position="1"/>
    </location>
</feature>
<feature type="chain" id="PRO_0000121122" description="Ras-related protein Rab-7a">
    <location>
        <begin position="2"/>
        <end position="207"/>
    </location>
</feature>
<feature type="short sequence motif" description="Switch 1" evidence="3">
    <location>
        <begin position="28"/>
        <end position="41"/>
    </location>
</feature>
<feature type="short sequence motif" description="Switch 2" evidence="3">
    <location>
        <begin position="67"/>
        <end position="82"/>
    </location>
</feature>
<feature type="binding site" evidence="3">
    <location>
        <position position="17"/>
    </location>
    <ligand>
        <name>GTP</name>
        <dbReference type="ChEBI" id="CHEBI:37565"/>
    </ligand>
</feature>
<feature type="binding site" evidence="3">
    <location>
        <position position="18"/>
    </location>
    <ligand>
        <name>GTP</name>
        <dbReference type="ChEBI" id="CHEBI:37565"/>
    </ligand>
</feature>
<feature type="binding site" evidence="3">
    <location>
        <position position="19"/>
    </location>
    <ligand>
        <name>GTP</name>
        <dbReference type="ChEBI" id="CHEBI:37565"/>
    </ligand>
</feature>
<feature type="binding site" evidence="3">
    <location>
        <position position="20"/>
    </location>
    <ligand>
        <name>GTP</name>
        <dbReference type="ChEBI" id="CHEBI:37565"/>
    </ligand>
</feature>
<feature type="binding site" evidence="3">
    <location>
        <position position="21"/>
    </location>
    <ligand>
        <name>GTP</name>
        <dbReference type="ChEBI" id="CHEBI:37565"/>
    </ligand>
</feature>
<feature type="binding site" evidence="3">
    <location>
        <position position="22"/>
    </location>
    <ligand>
        <name>GTP</name>
        <dbReference type="ChEBI" id="CHEBI:37565"/>
    </ligand>
</feature>
<feature type="binding site" evidence="3">
    <location>
        <position position="22"/>
    </location>
    <ligand>
        <name>Mg(2+)</name>
        <dbReference type="ChEBI" id="CHEBI:18420"/>
    </ligand>
</feature>
<feature type="binding site" evidence="3">
    <location>
        <position position="23"/>
    </location>
    <ligand>
        <name>GTP</name>
        <dbReference type="ChEBI" id="CHEBI:37565"/>
    </ligand>
</feature>
<feature type="binding site" evidence="3">
    <location>
        <position position="34"/>
    </location>
    <ligand>
        <name>GTP</name>
        <dbReference type="ChEBI" id="CHEBI:37565"/>
    </ligand>
</feature>
<feature type="binding site" evidence="3">
    <location>
        <position position="35"/>
    </location>
    <ligand>
        <name>GTP</name>
        <dbReference type="ChEBI" id="CHEBI:37565"/>
    </ligand>
</feature>
<feature type="binding site" evidence="3">
    <location>
        <position position="37"/>
    </location>
    <ligand>
        <name>GTP</name>
        <dbReference type="ChEBI" id="CHEBI:37565"/>
    </ligand>
</feature>
<feature type="binding site" evidence="3">
    <location>
        <position position="40"/>
    </location>
    <ligand>
        <name>GTP</name>
        <dbReference type="ChEBI" id="CHEBI:37565"/>
    </ligand>
</feature>
<feature type="binding site" evidence="3">
    <location>
        <position position="40"/>
    </location>
    <ligand>
        <name>Mg(2+)</name>
        <dbReference type="ChEBI" id="CHEBI:18420"/>
    </ligand>
</feature>
<feature type="binding site" evidence="3">
    <location>
        <position position="63"/>
    </location>
    <ligand>
        <name>Mg(2+)</name>
        <dbReference type="ChEBI" id="CHEBI:18420"/>
    </ligand>
</feature>
<feature type="binding site" evidence="3">
    <location>
        <position position="66"/>
    </location>
    <ligand>
        <name>GTP</name>
        <dbReference type="ChEBI" id="CHEBI:37565"/>
    </ligand>
</feature>
<feature type="binding site" evidence="3">
    <location>
        <position position="125"/>
    </location>
    <ligand>
        <name>GTP</name>
        <dbReference type="ChEBI" id="CHEBI:37565"/>
    </ligand>
</feature>
<feature type="binding site" evidence="3">
    <location>
        <position position="126"/>
    </location>
    <ligand>
        <name>GTP</name>
        <dbReference type="ChEBI" id="CHEBI:37565"/>
    </ligand>
</feature>
<feature type="binding site" evidence="3">
    <location>
        <position position="128"/>
    </location>
    <ligand>
        <name>GTP</name>
        <dbReference type="ChEBI" id="CHEBI:37565"/>
    </ligand>
</feature>
<feature type="binding site" evidence="3">
    <location>
        <position position="156"/>
    </location>
    <ligand>
        <name>GTP</name>
        <dbReference type="ChEBI" id="CHEBI:37565"/>
    </ligand>
</feature>
<feature type="binding site" evidence="3">
    <location>
        <position position="157"/>
    </location>
    <ligand>
        <name>GTP</name>
        <dbReference type="ChEBI" id="CHEBI:37565"/>
    </ligand>
</feature>
<feature type="modified residue" description="N-acetylthreonine" evidence="3">
    <location>
        <position position="2"/>
    </location>
</feature>
<feature type="modified residue" description="Phosphoserine" evidence="17 18">
    <location>
        <position position="72"/>
    </location>
</feature>
<feature type="modified residue" description="Cysteine methyl ester" evidence="1">
    <location>
        <position position="207"/>
    </location>
</feature>
<feature type="lipid moiety-binding region" description="S-geranylgeranyl cysteine" evidence="1">
    <location>
        <position position="205"/>
    </location>
</feature>
<feature type="lipid moiety-binding region" description="S-geranylgeranyl cysteine" evidence="1">
    <location>
        <position position="207"/>
    </location>
</feature>
<feature type="cross-link" description="Glycyl lysine isopeptide (Lys-Gly) (interchain with G-Cter in ubiquitin)" evidence="3">
    <location>
        <position position="191"/>
    </location>
</feature>
<feature type="cross-link" description="Glycyl lysine isopeptide (Lys-Gly) (interchain with G-Cter in ubiquitin)" evidence="3">
    <location>
        <position position="194"/>
    </location>
</feature>
<feature type="sequence conflict" description="In Ref. 1; CAA61797." evidence="14" ref="1">
    <original>S</original>
    <variation>R</variation>
    <location>
        <position position="145"/>
    </location>
</feature>
<feature type="strand" evidence="19">
    <location>
        <begin position="7"/>
        <end position="15"/>
    </location>
</feature>
<feature type="helix" evidence="19">
    <location>
        <begin position="21"/>
        <end position="30"/>
    </location>
</feature>
<feature type="strand" evidence="19">
    <location>
        <begin position="44"/>
        <end position="52"/>
    </location>
</feature>
<feature type="strand" evidence="19">
    <location>
        <begin position="55"/>
        <end position="63"/>
    </location>
</feature>
<feature type="turn" evidence="19">
    <location>
        <begin position="68"/>
        <end position="70"/>
    </location>
</feature>
<feature type="helix" evidence="19">
    <location>
        <begin position="71"/>
        <end position="74"/>
    </location>
</feature>
<feature type="helix" evidence="19">
    <location>
        <begin position="75"/>
        <end position="77"/>
    </location>
</feature>
<feature type="strand" evidence="19">
    <location>
        <begin position="82"/>
        <end position="89"/>
    </location>
</feature>
<feature type="helix" evidence="19">
    <location>
        <begin position="93"/>
        <end position="97"/>
    </location>
</feature>
<feature type="helix" evidence="19">
    <location>
        <begin position="99"/>
        <end position="110"/>
    </location>
</feature>
<feature type="helix" evidence="19">
    <location>
        <begin position="115"/>
        <end position="117"/>
    </location>
</feature>
<feature type="strand" evidence="19">
    <location>
        <begin position="120"/>
        <end position="125"/>
    </location>
</feature>
<feature type="strand" evidence="19">
    <location>
        <begin position="129"/>
        <end position="131"/>
    </location>
</feature>
<feature type="helix" evidence="19">
    <location>
        <begin position="136"/>
        <end position="145"/>
    </location>
</feature>
<feature type="strand" evidence="19">
    <location>
        <begin position="151"/>
        <end position="153"/>
    </location>
</feature>
<feature type="turn" evidence="19">
    <location>
        <begin position="156"/>
        <end position="159"/>
    </location>
</feature>
<feature type="helix" evidence="19">
    <location>
        <begin position="162"/>
        <end position="174"/>
    </location>
</feature>
<protein>
    <recommendedName>
        <fullName>Ras-related protein Rab-7a</fullName>
        <ecNumber evidence="6">3.6.5.2</ecNumber>
    </recommendedName>
</protein>
<organism>
    <name type="scientific">Mus musculus</name>
    <name type="common">Mouse</name>
    <dbReference type="NCBI Taxonomy" id="10090"/>
    <lineage>
        <taxon>Eukaryota</taxon>
        <taxon>Metazoa</taxon>
        <taxon>Chordata</taxon>
        <taxon>Craniata</taxon>
        <taxon>Vertebrata</taxon>
        <taxon>Euteleostomi</taxon>
        <taxon>Mammalia</taxon>
        <taxon>Eutheria</taxon>
        <taxon>Euarchontoglires</taxon>
        <taxon>Glires</taxon>
        <taxon>Rodentia</taxon>
        <taxon>Myomorpha</taxon>
        <taxon>Muroidea</taxon>
        <taxon>Muridae</taxon>
        <taxon>Murinae</taxon>
        <taxon>Mus</taxon>
        <taxon>Mus</taxon>
    </lineage>
</organism>
<comment type="function">
    <text evidence="3 8 9">The small GTPases Rab are key regulators of intracellular membrane trafficking, from the formation of transport vesicles to their fusion with membranes. Rabs cycle between an inactive GDP-bound form and an active GTP-bound form that is able to recruit to membranes different sets of downstream effectors directly responsible for vesicle formation, movement, tethering and fusion. In its active state, RAB7A binds to a variety of effector proteins playing a key role in the regulation of endo-lysosomal trafficking. Governs early-to-late endosomal maturation, microtubule minus-end as well as plus-end directed endosomal migration and positioning, and endosome-lysosome transport through different protein-protein interaction cascades. Also plays a central role in growth-factor-mediated cell signaling, nutrient-transporter-mediated nutrient uptake, neurotrophin transport in the axons of neurons and lipid metabolism. Also involved in regulation of some specialized endosomal membrane trafficking, such as maturation of melanosomes, pathogen-induced phagosomes (or vacuoles) and autophagosomes. Plays a role in the maturation and acidification of phagosomes that engulf pathogens, such as S.aureus and Mycobacteria. Plays a role in the fusion of phagosomes with lysosomes. In concert with RAC1, plays a role in regulating the formation of RBs (ruffled borders) in osteoclasts. Controls the endosomal trafficking and neurite outgrowth signaling of NTRK1/TRKA. Regulates the endocytic trafficking of the EGF-EGFR complex by regulating its lysosomal degradation (By similarity). Involved in the ADRB2-stimulated lipolysis through lipophagy, a cytosolic lipase-independent autophagic pathway (PubMed:23708524). Required for the exosomal release of SDCBP, CD63 and syndecan (By similarity). Required for vesicular trafficking and cell surface expression of ACE2 (By similarity). May play a role in PRPH neuronal intermediate filament assembly (PubMed:23179371).</text>
</comment>
<comment type="catalytic activity">
    <reaction evidence="6">
        <text>GTP + H2O = GDP + phosphate + H(+)</text>
        <dbReference type="Rhea" id="RHEA:19669"/>
        <dbReference type="ChEBI" id="CHEBI:15377"/>
        <dbReference type="ChEBI" id="CHEBI:15378"/>
        <dbReference type="ChEBI" id="CHEBI:37565"/>
        <dbReference type="ChEBI" id="CHEBI:43474"/>
        <dbReference type="ChEBI" id="CHEBI:58189"/>
        <dbReference type="EC" id="3.6.5.2"/>
    </reaction>
    <physiologicalReaction direction="left-to-right" evidence="15">
        <dbReference type="Rhea" id="RHEA:19670"/>
    </physiologicalReaction>
</comment>
<comment type="cofactor">
    <cofactor evidence="3">
        <name>Mg(2+)</name>
        <dbReference type="ChEBI" id="CHEBI:18420"/>
    </cofactor>
</comment>
<comment type="activity regulation">
    <text evidence="3">Regulated by guanine nucleotide exchange factors (GEFs) which promote the exchange of bound GDP for free GTP. Regulated by GTPase activating proteins (GAPs) which increase the GTP hydrolysis activity. Inhibited by GDP dissociation inhibitors (GDIs).</text>
</comment>
<comment type="subunit">
    <text evidence="2 3 5 7 8 10 11 12 13">Interacts with NTRK1/TRKA (By similarity), RILP (By similarity), PSMA7 (By similarity), RNF115 (PubMed:12972561) and FYCO1 (By similarity). Interacts with the PIK3C3/VPS34-PIK3R4 complex (By similarity). The GTP-bound form interacts with OSBPL1A and RAC1 (By similarity). Interacts with CLN3 (By similarity). Interacts with CHM, the substrate-binding subunit of the Rab geranylgeranyltransferase complex (By similarity). Interacts with C9orf72 (PubMed:24549040). Does not interact with HPS4 and the BLOC-3 complex (heterodimer of HPS1 and HPS4) (PubMed:20048159). Interacts with CLN5 (By similarity). Interacts with PLEKHM1 (via N- and C-terminus) (PubMed:27777970). Interacts with PRPH; the interaction is direct (PubMed:23179371). Interacts with VPS13A (By similarity). The GDP-bound form interacts with RIMOC1 (By similarity). Interacts with the MON1A-CCZ1B complex and this interaction is enhanced in the presence of RIMOC1 (By similarity). Interacts with VPS39 and VPS41 (PubMed:28063257). Forms a ternary complex with LAMP2 and RUFY4; the interaction with LAMP2 is mediated by RUFY4 (via RUN and coiled coil domains) (PubMed:38744829).</text>
</comment>
<comment type="subcellular location">
    <subcellularLocation>
        <location evidence="3">Cytoplasmic vesicle</location>
        <location evidence="3">Phagosome membrane</location>
        <topology evidence="14">Peripheral membrane protein</topology>
        <orientation evidence="14">Cytoplasmic side</orientation>
    </subcellularLocation>
    <subcellularLocation>
        <location evidence="3">Late endosome membrane</location>
        <topology evidence="14">Peripheral membrane protein</topology>
        <orientation evidence="14">Cytoplasmic side</orientation>
    </subcellularLocation>
    <subcellularLocation>
        <location evidence="12">Lysosome membrane</location>
        <topology evidence="14">Peripheral membrane protein</topology>
        <orientation evidence="14">Cytoplasmic side</orientation>
    </subcellularLocation>
    <subcellularLocation>
        <location evidence="3">Melanosome membrane</location>
        <topology evidence="14">Peripheral membrane protein</topology>
        <orientation evidence="14">Cytoplasmic side</orientation>
    </subcellularLocation>
    <subcellularLocation>
        <location evidence="3">Cytoplasmic vesicle</location>
        <location evidence="3">Autophagosome membrane</location>
        <topology evidence="14">Peripheral membrane protein</topology>
        <orientation evidence="14">Cytoplasmic side</orientation>
    </subcellularLocation>
    <subcellularLocation>
        <location evidence="9">Lipid droplet</location>
    </subcellularLocation>
    <subcellularLocation>
        <location evidence="3">Endosome membrane</location>
    </subcellularLocation>
    <subcellularLocation>
        <location evidence="8">Cytoplasmic vesicle</location>
    </subcellularLocation>
    <subcellularLocation>
        <location evidence="3">Mitochondrion membrane</location>
        <topology evidence="14">Peripheral membrane protein</topology>
    </subcellularLocation>
    <text evidence="3 9">Colocalizes with OSBPL1A at the late endosome (By similarity). Found in the ruffled border (a late endosomal-like compartment in the plasma membrane) of bone-resorbing osteoclasts (By similarity). Recruited to phagosomes containing S.aureus or Mycobacterium (By similarity). Lipid droplet localization is increased upon ADRB2 stimulation (PubMed:23708524). Recruited to damaged mitochondria during mitophagy in a RIMOC1-dependent manner (By similarity).</text>
</comment>
<comment type="tissue specificity">
    <text evidence="4">Widely expressed. High expression in liver, heart and kidney. Found in sensory and motor neurons.</text>
</comment>
<comment type="developmental stage">
    <text evidence="8">Expressed in the dorsal root ganglia and the sciatic nerve at 13.5 dpc (at protein level).</text>
</comment>
<comment type="domain">
    <text evidence="3">Switch I, switch II and the interswitch regions are characteristic of Rab GTPases and mediate the interactions with Rab downstream effectors. The switch regions undergo conformational changes upon nucleotide binding which drive interaction with specific sets of effector proteins, with most effectors only binding to GTP-bound Rab.</text>
</comment>
<comment type="PTM">
    <text evidence="3">Deubiquitination at Lys-191 and Lys-194 by USP32.</text>
</comment>
<comment type="PTM">
    <text evidence="3">Phosphorylated at Ser-72 by LRRK1; phosphorylation is dependent on protein kinase C (PKC) activation of LRRK1.</text>
</comment>
<comment type="PTM">
    <text evidence="3">Prenylated. Prenylation is required for association with cellular membranes.</text>
</comment>
<comment type="disruption phenotype">
    <text evidence="9">Reduces both the basal and, to a greater degree, agonist-stimulated glycerol releases. the ADRB2-stimulated liposlysis.</text>
</comment>
<comment type="similarity">
    <text evidence="14">Belongs to the small GTPase superfamily. Rab family.</text>
</comment>
<keyword id="KW-0002">3D-structure</keyword>
<keyword id="KW-0007">Acetylation</keyword>
<keyword id="KW-0072">Autophagy</keyword>
<keyword id="KW-0968">Cytoplasmic vesicle</keyword>
<keyword id="KW-0903">Direct protein sequencing</keyword>
<keyword id="KW-0967">Endosome</keyword>
<keyword id="KW-0342">GTP-binding</keyword>
<keyword id="KW-0378">Hydrolase</keyword>
<keyword id="KW-1017">Isopeptide bond</keyword>
<keyword id="KW-0442">Lipid degradation</keyword>
<keyword id="KW-0551">Lipid droplet</keyword>
<keyword id="KW-0443">Lipid metabolism</keyword>
<keyword id="KW-0449">Lipoprotein</keyword>
<keyword id="KW-0458">Lysosome</keyword>
<keyword id="KW-0460">Magnesium</keyword>
<keyword id="KW-0472">Membrane</keyword>
<keyword id="KW-0479">Metal-binding</keyword>
<keyword id="KW-0488">Methylation</keyword>
<keyword id="KW-0496">Mitochondrion</keyword>
<keyword id="KW-0547">Nucleotide-binding</keyword>
<keyword id="KW-0597">Phosphoprotein</keyword>
<keyword id="KW-0636">Prenylation</keyword>
<keyword id="KW-0653">Protein transport</keyword>
<keyword id="KW-1185">Reference proteome</keyword>
<keyword id="KW-0813">Transport</keyword>
<keyword id="KW-0832">Ubl conjugation</keyword>
<proteinExistence type="evidence at protein level"/>
<accession>P51150</accession>